<accession>Q084N6</accession>
<name>TRPD_SHEFN</name>
<reference key="1">
    <citation type="submission" date="2006-08" db="EMBL/GenBank/DDBJ databases">
        <title>Complete sequence of Shewanella frigidimarina NCIMB 400.</title>
        <authorList>
            <consortium name="US DOE Joint Genome Institute"/>
            <person name="Copeland A."/>
            <person name="Lucas S."/>
            <person name="Lapidus A."/>
            <person name="Barry K."/>
            <person name="Detter J.C."/>
            <person name="Glavina del Rio T."/>
            <person name="Hammon N."/>
            <person name="Israni S."/>
            <person name="Dalin E."/>
            <person name="Tice H."/>
            <person name="Pitluck S."/>
            <person name="Fredrickson J.K."/>
            <person name="Kolker E."/>
            <person name="McCuel L.A."/>
            <person name="DiChristina T."/>
            <person name="Nealson K.H."/>
            <person name="Newman D."/>
            <person name="Tiedje J.M."/>
            <person name="Zhou J."/>
            <person name="Romine M.F."/>
            <person name="Culley D.E."/>
            <person name="Serres M."/>
            <person name="Chertkov O."/>
            <person name="Brettin T."/>
            <person name="Bruce D."/>
            <person name="Han C."/>
            <person name="Tapia R."/>
            <person name="Gilna P."/>
            <person name="Schmutz J."/>
            <person name="Larimer F."/>
            <person name="Land M."/>
            <person name="Hauser L."/>
            <person name="Kyrpides N."/>
            <person name="Mikhailova N."/>
            <person name="Richardson P."/>
        </authorList>
    </citation>
    <scope>NUCLEOTIDE SEQUENCE [LARGE SCALE GENOMIC DNA]</scope>
    <source>
        <strain>NCIMB 400</strain>
    </source>
</reference>
<protein>
    <recommendedName>
        <fullName evidence="1">Anthranilate phosphoribosyltransferase</fullName>
        <ecNumber evidence="1">2.4.2.18</ecNumber>
    </recommendedName>
</protein>
<organism>
    <name type="scientific">Shewanella frigidimarina (strain NCIMB 400)</name>
    <dbReference type="NCBI Taxonomy" id="318167"/>
    <lineage>
        <taxon>Bacteria</taxon>
        <taxon>Pseudomonadati</taxon>
        <taxon>Pseudomonadota</taxon>
        <taxon>Gammaproteobacteria</taxon>
        <taxon>Alteromonadales</taxon>
        <taxon>Shewanellaceae</taxon>
        <taxon>Shewanella</taxon>
    </lineage>
</organism>
<comment type="function">
    <text evidence="1">Catalyzes the transfer of the phosphoribosyl group of 5-phosphorylribose-1-pyrophosphate (PRPP) to anthranilate to yield N-(5'-phosphoribosyl)-anthranilate (PRA).</text>
</comment>
<comment type="catalytic activity">
    <reaction evidence="1">
        <text>N-(5-phospho-beta-D-ribosyl)anthranilate + diphosphate = 5-phospho-alpha-D-ribose 1-diphosphate + anthranilate</text>
        <dbReference type="Rhea" id="RHEA:11768"/>
        <dbReference type="ChEBI" id="CHEBI:16567"/>
        <dbReference type="ChEBI" id="CHEBI:18277"/>
        <dbReference type="ChEBI" id="CHEBI:33019"/>
        <dbReference type="ChEBI" id="CHEBI:58017"/>
        <dbReference type="EC" id="2.4.2.18"/>
    </reaction>
</comment>
<comment type="cofactor">
    <cofactor evidence="1">
        <name>Mg(2+)</name>
        <dbReference type="ChEBI" id="CHEBI:18420"/>
    </cofactor>
    <text evidence="1">Binds 2 magnesium ions per monomer.</text>
</comment>
<comment type="pathway">
    <text evidence="1">Amino-acid biosynthesis; L-tryptophan biosynthesis; L-tryptophan from chorismate: step 2/5.</text>
</comment>
<comment type="subunit">
    <text evidence="1">Homodimer.</text>
</comment>
<comment type="similarity">
    <text evidence="1">Belongs to the anthranilate phosphoribosyltransferase family.</text>
</comment>
<keyword id="KW-0028">Amino-acid biosynthesis</keyword>
<keyword id="KW-0057">Aromatic amino acid biosynthesis</keyword>
<keyword id="KW-0328">Glycosyltransferase</keyword>
<keyword id="KW-0460">Magnesium</keyword>
<keyword id="KW-0479">Metal-binding</keyword>
<keyword id="KW-1185">Reference proteome</keyword>
<keyword id="KW-0808">Transferase</keyword>
<keyword id="KW-0822">Tryptophan biosynthesis</keyword>
<evidence type="ECO:0000255" key="1">
    <source>
        <dbReference type="HAMAP-Rule" id="MF_00211"/>
    </source>
</evidence>
<gene>
    <name evidence="1" type="primary">trpD</name>
    <name type="ordered locus">Sfri_1427</name>
</gene>
<proteinExistence type="inferred from homology"/>
<sequence>MDNLQTLFDHLYQGKPLTREQMAQVFSTIIQGDMQPATMAGMLVALKMRGETIDEIAGAADALRQAAKPFPRSDASKQSGIVDIVGTGGDGHNTINISTTAAFVAAAAGAKVAKHGNRSVSSKSGSSDLLSHCGIALTMAPDAASQCLDKLGLCFLFAPHYHGGVKHAVPVRQALKTRTIFNVLGPLINPASPEFMLLGVYTLELIEPIAQVLHALGVKRAMVVYGSGLDEVALHDNTHVAELKDGVVRTYQLSPEDLGVNRADIAQLTGGEPADNALITQAILQGKGLPAHRDAVAINAGCALYISGICDSVQAGTQLALATLASGTAFTLLTDLAAASQAGEHNE</sequence>
<feature type="chain" id="PRO_0000325464" description="Anthranilate phosphoribosyltransferase">
    <location>
        <begin position="1"/>
        <end position="347"/>
    </location>
</feature>
<feature type="binding site" evidence="1">
    <location>
        <position position="86"/>
    </location>
    <ligand>
        <name>5-phospho-alpha-D-ribose 1-diphosphate</name>
        <dbReference type="ChEBI" id="CHEBI:58017"/>
    </ligand>
</feature>
<feature type="binding site" evidence="1">
    <location>
        <position position="86"/>
    </location>
    <ligand>
        <name>anthranilate</name>
        <dbReference type="ChEBI" id="CHEBI:16567"/>
        <label>1</label>
    </ligand>
</feature>
<feature type="binding site" evidence="1">
    <location>
        <begin position="89"/>
        <end position="90"/>
    </location>
    <ligand>
        <name>5-phospho-alpha-D-ribose 1-diphosphate</name>
        <dbReference type="ChEBI" id="CHEBI:58017"/>
    </ligand>
</feature>
<feature type="binding site" evidence="1">
    <location>
        <position position="94"/>
    </location>
    <ligand>
        <name>5-phospho-alpha-D-ribose 1-diphosphate</name>
        <dbReference type="ChEBI" id="CHEBI:58017"/>
    </ligand>
</feature>
<feature type="binding site" evidence="1">
    <location>
        <begin position="96"/>
        <end position="99"/>
    </location>
    <ligand>
        <name>5-phospho-alpha-D-ribose 1-diphosphate</name>
        <dbReference type="ChEBI" id="CHEBI:58017"/>
    </ligand>
</feature>
<feature type="binding site" evidence="1">
    <location>
        <position position="98"/>
    </location>
    <ligand>
        <name>Mg(2+)</name>
        <dbReference type="ChEBI" id="CHEBI:18420"/>
        <label>1</label>
    </ligand>
</feature>
<feature type="binding site" evidence="1">
    <location>
        <begin position="114"/>
        <end position="122"/>
    </location>
    <ligand>
        <name>5-phospho-alpha-D-ribose 1-diphosphate</name>
        <dbReference type="ChEBI" id="CHEBI:58017"/>
    </ligand>
</feature>
<feature type="binding site" evidence="1">
    <location>
        <position position="117"/>
    </location>
    <ligand>
        <name>anthranilate</name>
        <dbReference type="ChEBI" id="CHEBI:16567"/>
        <label>1</label>
    </ligand>
</feature>
<feature type="binding site" evidence="1">
    <location>
        <position position="126"/>
    </location>
    <ligand>
        <name>5-phospho-alpha-D-ribose 1-diphosphate</name>
        <dbReference type="ChEBI" id="CHEBI:58017"/>
    </ligand>
</feature>
<feature type="binding site" evidence="1">
    <location>
        <position position="172"/>
    </location>
    <ligand>
        <name>anthranilate</name>
        <dbReference type="ChEBI" id="CHEBI:16567"/>
        <label>2</label>
    </ligand>
</feature>
<feature type="binding site" evidence="1">
    <location>
        <position position="230"/>
    </location>
    <ligand>
        <name>Mg(2+)</name>
        <dbReference type="ChEBI" id="CHEBI:18420"/>
        <label>2</label>
    </ligand>
</feature>
<feature type="binding site" evidence="1">
    <location>
        <position position="231"/>
    </location>
    <ligand>
        <name>Mg(2+)</name>
        <dbReference type="ChEBI" id="CHEBI:18420"/>
        <label>1</label>
    </ligand>
</feature>
<feature type="binding site" evidence="1">
    <location>
        <position position="231"/>
    </location>
    <ligand>
        <name>Mg(2+)</name>
        <dbReference type="ChEBI" id="CHEBI:18420"/>
        <label>2</label>
    </ligand>
</feature>
<dbReference type="EC" id="2.4.2.18" evidence="1"/>
<dbReference type="EMBL" id="CP000447">
    <property type="protein sequence ID" value="ABI71279.1"/>
    <property type="molecule type" value="Genomic_DNA"/>
</dbReference>
<dbReference type="RefSeq" id="WP_011636900.1">
    <property type="nucleotide sequence ID" value="NC_008345.1"/>
</dbReference>
<dbReference type="SMR" id="Q084N6"/>
<dbReference type="STRING" id="318167.Sfri_1427"/>
<dbReference type="KEGG" id="sfr:Sfri_1427"/>
<dbReference type="eggNOG" id="COG0547">
    <property type="taxonomic scope" value="Bacteria"/>
</dbReference>
<dbReference type="HOGENOM" id="CLU_034315_2_1_6"/>
<dbReference type="OrthoDB" id="9806430at2"/>
<dbReference type="UniPathway" id="UPA00035">
    <property type="reaction ID" value="UER00041"/>
</dbReference>
<dbReference type="Proteomes" id="UP000000684">
    <property type="component" value="Chromosome"/>
</dbReference>
<dbReference type="GO" id="GO:0005829">
    <property type="term" value="C:cytosol"/>
    <property type="evidence" value="ECO:0007669"/>
    <property type="project" value="TreeGrafter"/>
</dbReference>
<dbReference type="GO" id="GO:0004048">
    <property type="term" value="F:anthranilate phosphoribosyltransferase activity"/>
    <property type="evidence" value="ECO:0007669"/>
    <property type="project" value="UniProtKB-UniRule"/>
</dbReference>
<dbReference type="GO" id="GO:0000287">
    <property type="term" value="F:magnesium ion binding"/>
    <property type="evidence" value="ECO:0007669"/>
    <property type="project" value="UniProtKB-UniRule"/>
</dbReference>
<dbReference type="GO" id="GO:0000162">
    <property type="term" value="P:L-tryptophan biosynthetic process"/>
    <property type="evidence" value="ECO:0007669"/>
    <property type="project" value="UniProtKB-UniRule"/>
</dbReference>
<dbReference type="FunFam" id="3.40.1030.10:FF:000002">
    <property type="entry name" value="Anthranilate phosphoribosyltransferase"/>
    <property type="match status" value="1"/>
</dbReference>
<dbReference type="Gene3D" id="3.40.1030.10">
    <property type="entry name" value="Nucleoside phosphorylase/phosphoribosyltransferase catalytic domain"/>
    <property type="match status" value="1"/>
</dbReference>
<dbReference type="Gene3D" id="1.20.970.10">
    <property type="entry name" value="Transferase, Pyrimidine Nucleoside Phosphorylase, Chain C"/>
    <property type="match status" value="1"/>
</dbReference>
<dbReference type="HAMAP" id="MF_00211">
    <property type="entry name" value="TrpD"/>
    <property type="match status" value="1"/>
</dbReference>
<dbReference type="InterPro" id="IPR005940">
    <property type="entry name" value="Anthranilate_Pribosyl_Tfrase"/>
</dbReference>
<dbReference type="InterPro" id="IPR000312">
    <property type="entry name" value="Glycosyl_Trfase_fam3"/>
</dbReference>
<dbReference type="InterPro" id="IPR017459">
    <property type="entry name" value="Glycosyl_Trfase_fam3_N_dom"/>
</dbReference>
<dbReference type="InterPro" id="IPR036320">
    <property type="entry name" value="Glycosyl_Trfase_fam3_N_dom_sf"/>
</dbReference>
<dbReference type="InterPro" id="IPR035902">
    <property type="entry name" value="Nuc_phospho_transferase"/>
</dbReference>
<dbReference type="NCBIfam" id="TIGR01245">
    <property type="entry name" value="trpD"/>
    <property type="match status" value="1"/>
</dbReference>
<dbReference type="PANTHER" id="PTHR43285">
    <property type="entry name" value="ANTHRANILATE PHOSPHORIBOSYLTRANSFERASE"/>
    <property type="match status" value="1"/>
</dbReference>
<dbReference type="PANTHER" id="PTHR43285:SF2">
    <property type="entry name" value="ANTHRANILATE PHOSPHORIBOSYLTRANSFERASE"/>
    <property type="match status" value="1"/>
</dbReference>
<dbReference type="Pfam" id="PF02885">
    <property type="entry name" value="Glycos_trans_3N"/>
    <property type="match status" value="1"/>
</dbReference>
<dbReference type="Pfam" id="PF00591">
    <property type="entry name" value="Glycos_transf_3"/>
    <property type="match status" value="1"/>
</dbReference>
<dbReference type="SUPFAM" id="SSF52418">
    <property type="entry name" value="Nucleoside phosphorylase/phosphoribosyltransferase catalytic domain"/>
    <property type="match status" value="1"/>
</dbReference>
<dbReference type="SUPFAM" id="SSF47648">
    <property type="entry name" value="Nucleoside phosphorylase/phosphoribosyltransferase N-terminal domain"/>
    <property type="match status" value="1"/>
</dbReference>